<comment type="catalytic activity">
    <reaction evidence="1">
        <text>2-(N(omega)-L-arginino)succinate = fumarate + L-arginine</text>
        <dbReference type="Rhea" id="RHEA:24020"/>
        <dbReference type="ChEBI" id="CHEBI:29806"/>
        <dbReference type="ChEBI" id="CHEBI:32682"/>
        <dbReference type="ChEBI" id="CHEBI:57472"/>
        <dbReference type="EC" id="4.3.2.1"/>
    </reaction>
</comment>
<comment type="pathway">
    <text evidence="1">Amino-acid biosynthesis; L-arginine biosynthesis; L-arginine from L-ornithine and carbamoyl phosphate: step 3/3.</text>
</comment>
<comment type="subcellular location">
    <subcellularLocation>
        <location evidence="1">Cytoplasm</location>
    </subcellularLocation>
</comment>
<comment type="similarity">
    <text evidence="1">Belongs to the lyase 1 family. Argininosuccinate lyase subfamily.</text>
</comment>
<keyword id="KW-0028">Amino-acid biosynthesis</keyword>
<keyword id="KW-0055">Arginine biosynthesis</keyword>
<keyword id="KW-0963">Cytoplasm</keyword>
<keyword id="KW-0456">Lyase</keyword>
<keyword id="KW-1185">Reference proteome</keyword>
<protein>
    <recommendedName>
        <fullName evidence="1">Argininosuccinate lyase</fullName>
        <shortName evidence="1">ASAL</shortName>
        <ecNumber evidence="1">4.3.2.1</ecNumber>
    </recommendedName>
    <alternativeName>
        <fullName evidence="1">Arginosuccinase</fullName>
    </alternativeName>
</protein>
<reference key="1">
    <citation type="submission" date="2008-04" db="EMBL/GenBank/DDBJ databases">
        <title>Complete sequence of chromosome of Natranaerobius thermophilus JW/NM-WN-LF.</title>
        <authorList>
            <consortium name="US DOE Joint Genome Institute"/>
            <person name="Copeland A."/>
            <person name="Lucas S."/>
            <person name="Lapidus A."/>
            <person name="Glavina del Rio T."/>
            <person name="Dalin E."/>
            <person name="Tice H."/>
            <person name="Bruce D."/>
            <person name="Goodwin L."/>
            <person name="Pitluck S."/>
            <person name="Chertkov O."/>
            <person name="Brettin T."/>
            <person name="Detter J.C."/>
            <person name="Han C."/>
            <person name="Kuske C.R."/>
            <person name="Schmutz J."/>
            <person name="Larimer F."/>
            <person name="Land M."/>
            <person name="Hauser L."/>
            <person name="Kyrpides N."/>
            <person name="Lykidis A."/>
            <person name="Mesbah N.M."/>
            <person name="Wiegel J."/>
        </authorList>
    </citation>
    <scope>NUCLEOTIDE SEQUENCE [LARGE SCALE GENOMIC DNA]</scope>
    <source>
        <strain>ATCC BAA-1301 / DSM 18059 / JW/NM-WN-LF</strain>
    </source>
</reference>
<gene>
    <name evidence="1" type="primary">argH</name>
    <name type="ordered locus">Nther_0922</name>
</gene>
<sequence>MSKLWGGRFSKQTDQLVDEFNASIEFDNRLIFYDLLGSQAHVKMLFQQGIIDTTDYKQITEGLDIIWKEAEQDKLEFNLSDEDIHMSIEKRLIELKGEVGKKLHTARSRNDQVAVDMNMFLCDKAIKLVNELLQNMSVIKELSEQHTKTYMPGYTHLQRAQPTTLGHHMLNYFWKFQRDASRLIDFRNRADLSPLGSGAFAGTGFNISRRSTRKDLGFTQQFENSMDAVSSRDLSLEFIFCLSSIMINLSRLAEELILWSTKEFDFIELDDAFATGSSIMPQKKNPDVPELIRGKTGRVVGHLTALATTYKGLPMAYNKDFQEDKEGLFDSLDTVESSLKLTSKILSTMTIKTKNMEKALYQDFSNATDIADYLATQGIPFRDAHAVVGQLVKHCQEHNKLFYQLTEQELDISFKQIADSLEENSQQILTQMDTTKILNIMDPIKCVHNRNSRGAPAPEALQFQLGQAQKYFHSLTEQVKTYQSFLP</sequence>
<name>ARLY_NATTJ</name>
<feature type="chain" id="PRO_1000116209" description="Argininosuccinate lyase">
    <location>
        <begin position="1"/>
        <end position="487"/>
    </location>
</feature>
<proteinExistence type="inferred from homology"/>
<accession>B2A8E3</accession>
<organism>
    <name type="scientific">Natranaerobius thermophilus (strain ATCC BAA-1301 / DSM 18059 / JW/NM-WN-LF)</name>
    <dbReference type="NCBI Taxonomy" id="457570"/>
    <lineage>
        <taxon>Bacteria</taxon>
        <taxon>Bacillati</taxon>
        <taxon>Bacillota</taxon>
        <taxon>Clostridia</taxon>
        <taxon>Natranaerobiales</taxon>
        <taxon>Natranaerobiaceae</taxon>
        <taxon>Natranaerobius</taxon>
    </lineage>
</organism>
<evidence type="ECO:0000255" key="1">
    <source>
        <dbReference type="HAMAP-Rule" id="MF_00006"/>
    </source>
</evidence>
<dbReference type="EC" id="4.3.2.1" evidence="1"/>
<dbReference type="EMBL" id="CP001034">
    <property type="protein sequence ID" value="ACB84507.1"/>
    <property type="molecule type" value="Genomic_DNA"/>
</dbReference>
<dbReference type="RefSeq" id="WP_012447385.1">
    <property type="nucleotide sequence ID" value="NC_010718.1"/>
</dbReference>
<dbReference type="SMR" id="B2A8E3"/>
<dbReference type="FunCoup" id="B2A8E3">
    <property type="interactions" value="347"/>
</dbReference>
<dbReference type="STRING" id="457570.Nther_0922"/>
<dbReference type="KEGG" id="nth:Nther_0922"/>
<dbReference type="eggNOG" id="COG0165">
    <property type="taxonomic scope" value="Bacteria"/>
</dbReference>
<dbReference type="HOGENOM" id="CLU_027272_2_3_9"/>
<dbReference type="InParanoid" id="B2A8E3"/>
<dbReference type="OrthoDB" id="9769623at2"/>
<dbReference type="UniPathway" id="UPA00068">
    <property type="reaction ID" value="UER00114"/>
</dbReference>
<dbReference type="Proteomes" id="UP000001683">
    <property type="component" value="Chromosome"/>
</dbReference>
<dbReference type="GO" id="GO:0005829">
    <property type="term" value="C:cytosol"/>
    <property type="evidence" value="ECO:0007669"/>
    <property type="project" value="TreeGrafter"/>
</dbReference>
<dbReference type="GO" id="GO:0004056">
    <property type="term" value="F:argininosuccinate lyase activity"/>
    <property type="evidence" value="ECO:0007669"/>
    <property type="project" value="UniProtKB-UniRule"/>
</dbReference>
<dbReference type="GO" id="GO:0042450">
    <property type="term" value="P:arginine biosynthetic process via ornithine"/>
    <property type="evidence" value="ECO:0007669"/>
    <property type="project" value="InterPro"/>
</dbReference>
<dbReference type="GO" id="GO:0006526">
    <property type="term" value="P:L-arginine biosynthetic process"/>
    <property type="evidence" value="ECO:0007669"/>
    <property type="project" value="UniProtKB-UniRule"/>
</dbReference>
<dbReference type="CDD" id="cd01359">
    <property type="entry name" value="Argininosuccinate_lyase"/>
    <property type="match status" value="1"/>
</dbReference>
<dbReference type="FunFam" id="1.10.275.10:FF:000002">
    <property type="entry name" value="Argininosuccinate lyase"/>
    <property type="match status" value="1"/>
</dbReference>
<dbReference type="FunFam" id="1.20.200.10:FF:000015">
    <property type="entry name" value="argininosuccinate lyase isoform X2"/>
    <property type="match status" value="1"/>
</dbReference>
<dbReference type="Gene3D" id="1.10.40.30">
    <property type="entry name" value="Fumarase/aspartase (C-terminal domain)"/>
    <property type="match status" value="1"/>
</dbReference>
<dbReference type="Gene3D" id="1.20.200.10">
    <property type="entry name" value="Fumarase/aspartase (Central domain)"/>
    <property type="match status" value="1"/>
</dbReference>
<dbReference type="Gene3D" id="1.10.275.10">
    <property type="entry name" value="Fumarase/aspartase (N-terminal domain)"/>
    <property type="match status" value="1"/>
</dbReference>
<dbReference type="HAMAP" id="MF_00006">
    <property type="entry name" value="Arg_succ_lyase"/>
    <property type="match status" value="1"/>
</dbReference>
<dbReference type="InterPro" id="IPR029419">
    <property type="entry name" value="Arg_succ_lyase_C"/>
</dbReference>
<dbReference type="InterPro" id="IPR009049">
    <property type="entry name" value="Argininosuccinate_lyase"/>
</dbReference>
<dbReference type="InterPro" id="IPR024083">
    <property type="entry name" value="Fumarase/histidase_N"/>
</dbReference>
<dbReference type="InterPro" id="IPR020557">
    <property type="entry name" value="Fumarate_lyase_CS"/>
</dbReference>
<dbReference type="InterPro" id="IPR000362">
    <property type="entry name" value="Fumarate_lyase_fam"/>
</dbReference>
<dbReference type="InterPro" id="IPR022761">
    <property type="entry name" value="Fumarate_lyase_N"/>
</dbReference>
<dbReference type="InterPro" id="IPR008948">
    <property type="entry name" value="L-Aspartase-like"/>
</dbReference>
<dbReference type="NCBIfam" id="TIGR00838">
    <property type="entry name" value="argH"/>
    <property type="match status" value="1"/>
</dbReference>
<dbReference type="PANTHER" id="PTHR43814">
    <property type="entry name" value="ARGININOSUCCINATE LYASE"/>
    <property type="match status" value="1"/>
</dbReference>
<dbReference type="PANTHER" id="PTHR43814:SF1">
    <property type="entry name" value="ARGININOSUCCINATE LYASE"/>
    <property type="match status" value="1"/>
</dbReference>
<dbReference type="Pfam" id="PF14698">
    <property type="entry name" value="ASL_C2"/>
    <property type="match status" value="1"/>
</dbReference>
<dbReference type="Pfam" id="PF00206">
    <property type="entry name" value="Lyase_1"/>
    <property type="match status" value="1"/>
</dbReference>
<dbReference type="PRINTS" id="PR00145">
    <property type="entry name" value="ARGSUCLYASE"/>
</dbReference>
<dbReference type="PRINTS" id="PR00149">
    <property type="entry name" value="FUMRATELYASE"/>
</dbReference>
<dbReference type="SUPFAM" id="SSF48557">
    <property type="entry name" value="L-aspartase-like"/>
    <property type="match status" value="1"/>
</dbReference>
<dbReference type="PROSITE" id="PS00163">
    <property type="entry name" value="FUMARATE_LYASES"/>
    <property type="match status" value="1"/>
</dbReference>